<accession>Q910N6</accession>
<accession>Q77IM2</accession>
<accession>Q910N5</accession>
<name>M1_I68A4</name>
<protein>
    <recommendedName>
        <fullName evidence="1">Matrix protein 1</fullName>
        <shortName evidence="1">M1</shortName>
    </recommendedName>
</protein>
<keyword id="KW-0025">Alternative splicing</keyword>
<keyword id="KW-1048">Host nucleus</keyword>
<keyword id="KW-0472">Membrane</keyword>
<keyword id="KW-0694">RNA-binding</keyword>
<keyword id="KW-0468">Viral matrix protein</keyword>
<keyword id="KW-0946">Virion</keyword>
<feature type="chain" id="PRO_0000326287" description="Matrix protein 1">
    <location>
        <begin position="1"/>
        <end position="252"/>
    </location>
</feature>
<feature type="region of interest" description="Membrane-binding" evidence="1">
    <location>
        <begin position="1"/>
        <end position="164"/>
    </location>
</feature>
<feature type="region of interest" description="RNP-binding" evidence="1">
    <location>
        <begin position="165"/>
        <end position="252"/>
    </location>
</feature>
<feature type="short sequence motif" description="Nuclear localization signal" evidence="1">
    <location>
        <begin position="101"/>
        <end position="105"/>
    </location>
</feature>
<feature type="sequence variant" description="In strain: Isolate MA20c.">
    <original>T</original>
    <variation>A</variation>
    <location>
        <position position="167"/>
    </location>
</feature>
<feature type="sequence variant" description="In strain: Isolate MA20 and Isolate MA20a.">
    <original>D</original>
    <variation>N</variation>
    <location>
        <position position="232"/>
    </location>
</feature>
<dbReference type="EMBL" id="AF348188">
    <property type="protein sequence ID" value="AAK51730.1"/>
    <property type="molecule type" value="Genomic_RNA"/>
</dbReference>
<dbReference type="EMBL" id="AF348189">
    <property type="protein sequence ID" value="AAK51732.1"/>
    <property type="molecule type" value="Genomic_RNA"/>
</dbReference>
<dbReference type="EMBL" id="AF348190">
    <property type="protein sequence ID" value="AAK51734.1"/>
    <property type="molecule type" value="Genomic_RNA"/>
</dbReference>
<dbReference type="EMBL" id="AF348191">
    <property type="protein sequence ID" value="AAK51736.1"/>
    <property type="molecule type" value="Genomic_RNA"/>
</dbReference>
<dbReference type="EMBL" id="AF348192">
    <property type="protein sequence ID" value="AAK51738.1"/>
    <property type="molecule type" value="Genomic_RNA"/>
</dbReference>
<dbReference type="EMBL" id="AF348193">
    <property type="protein sequence ID" value="AAK51740.1"/>
    <property type="molecule type" value="Genomic_RNA"/>
</dbReference>
<dbReference type="EMBL" id="AF348194">
    <property type="protein sequence ID" value="AAK51742.1"/>
    <property type="molecule type" value="Genomic_RNA"/>
</dbReference>
<dbReference type="EMBL" id="AF348195">
    <property type="protein sequence ID" value="AAK51744.1"/>
    <property type="molecule type" value="Genomic_RNA"/>
</dbReference>
<dbReference type="EMBL" id="AF348196">
    <property type="protein sequence ID" value="AAK51746.1"/>
    <property type="molecule type" value="Genomic_RNA"/>
</dbReference>
<dbReference type="EMBL" id="AF348197">
    <property type="protein sequence ID" value="AAK51748.1"/>
    <property type="molecule type" value="Genomic_RNA"/>
</dbReference>
<dbReference type="SMR" id="Q910N6"/>
<dbReference type="DIP" id="DIP-61688N"/>
<dbReference type="IntAct" id="Q910N6">
    <property type="interactions" value="1"/>
</dbReference>
<dbReference type="Proteomes" id="UP000142359">
    <property type="component" value="Genome"/>
</dbReference>
<dbReference type="GO" id="GO:0042025">
    <property type="term" value="C:host cell nucleus"/>
    <property type="evidence" value="ECO:0007669"/>
    <property type="project" value="UniProtKB-SubCell"/>
</dbReference>
<dbReference type="GO" id="GO:0016020">
    <property type="term" value="C:membrane"/>
    <property type="evidence" value="ECO:0007669"/>
    <property type="project" value="UniProtKB-KW"/>
</dbReference>
<dbReference type="GO" id="GO:0055036">
    <property type="term" value="C:virion membrane"/>
    <property type="evidence" value="ECO:0007669"/>
    <property type="project" value="UniProtKB-SubCell"/>
</dbReference>
<dbReference type="GO" id="GO:0003723">
    <property type="term" value="F:RNA binding"/>
    <property type="evidence" value="ECO:0007669"/>
    <property type="project" value="UniProtKB-UniRule"/>
</dbReference>
<dbReference type="GO" id="GO:0039660">
    <property type="term" value="F:structural constituent of virion"/>
    <property type="evidence" value="ECO:0007669"/>
    <property type="project" value="UniProtKB-UniRule"/>
</dbReference>
<dbReference type="GO" id="GO:0046761">
    <property type="term" value="P:viral budding from plasma membrane"/>
    <property type="evidence" value="ECO:0007669"/>
    <property type="project" value="UniProtKB-UniRule"/>
</dbReference>
<dbReference type="FunFam" id="1.10.10.180:FF:000001">
    <property type="entry name" value="Matrix protein 1"/>
    <property type="match status" value="1"/>
</dbReference>
<dbReference type="FunFam" id="1.20.91.10:FF:000001">
    <property type="entry name" value="Matrix protein 1"/>
    <property type="match status" value="1"/>
</dbReference>
<dbReference type="Gene3D" id="1.10.10.180">
    <property type="match status" value="1"/>
</dbReference>
<dbReference type="Gene3D" id="1.20.91.10">
    <property type="match status" value="1"/>
</dbReference>
<dbReference type="HAMAP" id="MF_04068">
    <property type="entry name" value="INFV_M1"/>
    <property type="match status" value="1"/>
</dbReference>
<dbReference type="InterPro" id="IPR036039">
    <property type="entry name" value="Flu_matrix_M1"/>
</dbReference>
<dbReference type="InterPro" id="IPR013188">
    <property type="entry name" value="Flu_matrix_M1_C"/>
</dbReference>
<dbReference type="InterPro" id="IPR001561">
    <property type="entry name" value="Flu_matrix_M1_N"/>
</dbReference>
<dbReference type="InterPro" id="IPR015423">
    <property type="entry name" value="Flu_matrix_M1_N_sub1"/>
</dbReference>
<dbReference type="InterPro" id="IPR015799">
    <property type="entry name" value="Flu_matrix_M1_N_sub2"/>
</dbReference>
<dbReference type="InterPro" id="IPR037533">
    <property type="entry name" value="INFV_M1"/>
</dbReference>
<dbReference type="Pfam" id="PF00598">
    <property type="entry name" value="Flu_M1"/>
    <property type="match status" value="1"/>
</dbReference>
<dbReference type="Pfam" id="PF08289">
    <property type="entry name" value="Flu_M1_C"/>
    <property type="match status" value="1"/>
</dbReference>
<dbReference type="SMART" id="SM00759">
    <property type="entry name" value="Flu_M1_C"/>
    <property type="match status" value="1"/>
</dbReference>
<dbReference type="SUPFAM" id="SSF48145">
    <property type="entry name" value="Influenza virus matrix protein M1"/>
    <property type="match status" value="1"/>
</dbReference>
<comment type="function">
    <text evidence="1">Plays critical roles in virus replication, from virus entry and uncoating to assembly and budding of the virus particle. M1 binding to ribonucleocapsids (RNPs) in nucleus seems to inhibit viral transcription. Interaction of viral NEP with M1-RNP is thought to promote nuclear export of the complex, which is targeted to the virion assembly site at the apical plasma membrane in polarized epithelial cells. Interactions with NA and HA may bring M1, a non-raft-associated protein, into lipid rafts. Forms a continuous shell on the inner side of the lipid bilayer in virion, where it binds the RNP. During virus entry into cell, the M2 ion channel acidifies the internal virion core, inducing M1 dissociation from the RNP. M1-free RNPs are transported to the nucleus, where viral transcription and replication can take place.</text>
</comment>
<comment type="function">
    <text evidence="1">Determines the virion's shape: spherical or filamentous. Clinical isolates of influenza are characterized by the presence of significant proportion of filamentous virions, whereas after multiple passage on eggs or cell culture, virions have only spherical morphology. Filamentous virions are thought to be important to infect neighboring cells, and spherical virions more suited to spread through aerosol between hosts organisms.</text>
</comment>
<comment type="subunit">
    <text evidence="1">Homodimer and homomultimer. Interacts with NEP. Binds ribonucleocapsid by both interacting with genomic RNA and NP protein. May interact with HA and NA. Cannot bind NP without genomic RNA.</text>
</comment>
<comment type="subcellular location">
    <subcellularLocation>
        <location evidence="1">Virion membrane</location>
        <topology evidence="1">Peripheral membrane protein</topology>
        <orientation evidence="1">Cytoplasmic side</orientation>
    </subcellularLocation>
    <subcellularLocation>
        <location evidence="1">Host nucleus</location>
    </subcellularLocation>
</comment>
<comment type="alternative products">
    <event type="alternative splicing"/>
    <isoform>
        <id>Q910N6-1</id>
        <name>M1</name>
        <sequence type="displayed"/>
    </isoform>
    <isoform>
        <id>Q77IM6-1</id>
        <name>M2</name>
        <sequence type="external"/>
    </isoform>
    <text>Only the first 9 residues are shared by the 2 isoforms.</text>
</comment>
<comment type="miscellaneous">
    <text evidence="1">Most abundant protein in virion. When expressed alone can form virus-like particles in transfected cells.</text>
</comment>
<comment type="similarity">
    <text evidence="1">Belongs to the influenza viruses Matrix protein M1 family.</text>
</comment>
<organismHost>
    <name type="scientific">Aves</name>
    <dbReference type="NCBI Taxonomy" id="8782"/>
</organismHost>
<organismHost>
    <name type="scientific">Cetacea</name>
    <name type="common">whales</name>
    <dbReference type="NCBI Taxonomy" id="9721"/>
</organismHost>
<organismHost>
    <name type="scientific">Homo sapiens</name>
    <name type="common">Human</name>
    <dbReference type="NCBI Taxonomy" id="9606"/>
</organismHost>
<organismHost>
    <name type="scientific">Phocidae</name>
    <name type="common">true seals</name>
    <dbReference type="NCBI Taxonomy" id="9709"/>
</organismHost>
<organismHost>
    <name type="scientific">Sus scrofa</name>
    <name type="common">Pig</name>
    <dbReference type="NCBI Taxonomy" id="9823"/>
</organismHost>
<evidence type="ECO:0000255" key="1">
    <source>
        <dbReference type="HAMAP-Rule" id="MF_04068"/>
    </source>
</evidence>
<sequence>MSLLTEVETYVLSIVPSGPLKAEIAQRLEDVFAGKNTDLEALMEWLKTRPILSPLTKGILGFVFTLTVPSERGLQRRRFVQNALNGNGDPNNMDRAVKLYRKLKREITFHGAKEIALSYSAGALASCMGLIYNRMGAVTTEVAFGLVCATCEQIADSQHRSHRQMVTTTNPLIRHENRMVLASTTAKAMEQMAGSSEQAAEAMEVASQARQMVQAMRAIGTHPSSSAGLKDDLLENLQAYQKRMGVQMQRFK</sequence>
<proteinExistence type="inferred from homology"/>
<gene>
    <name evidence="1" type="primary">M</name>
</gene>
<reference key="1">
    <citation type="journal article" date="2001" name="Proc. Natl. Acad. Sci. U.S.A.">
        <title>Pattern of mutation in the genome of influenza A virus on adaptation to increased virulence in the mouse lung: identification of functional themes.</title>
        <authorList>
            <person name="Brown E.G."/>
            <person name="Liu H."/>
            <person name="Kit L.C."/>
            <person name="Baird S."/>
            <person name="Nesrallah M."/>
        </authorList>
    </citation>
    <scope>NUCLEOTIDE SEQUENCE [GENOMIC RNA]</scope>
    <source>
        <strain>A/Hong Kong/1/1968</strain>
        <strain>Isolate MA12</strain>
        <strain>Isolate MA12A</strain>
        <strain>Isolate MA12B</strain>
        <strain>Isolate MA20</strain>
        <strain>Isolate MA20a Isolate MA20b</strain>
        <strain>Isolate MA20c</strain>
        <strain>Isolate MA20d</strain>
        <strain>Isolate MA20e</strain>
    </source>
</reference>
<organism>
    <name type="scientific">Influenza A virus (strain A/Hong Kong/1/1968 H3N2)</name>
    <dbReference type="NCBI Taxonomy" id="506350"/>
    <lineage>
        <taxon>Viruses</taxon>
        <taxon>Riboviria</taxon>
        <taxon>Orthornavirae</taxon>
        <taxon>Negarnaviricota</taxon>
        <taxon>Polyploviricotina</taxon>
        <taxon>Insthoviricetes</taxon>
        <taxon>Articulavirales</taxon>
        <taxon>Orthomyxoviridae</taxon>
        <taxon>Alphainfluenzavirus</taxon>
        <taxon>Alphainfluenzavirus influenzae</taxon>
        <taxon>Influenza A virus</taxon>
    </lineage>
</organism>